<evidence type="ECO:0000255" key="1">
    <source>
        <dbReference type="HAMAP-Rule" id="MF_00296"/>
    </source>
</evidence>
<feature type="chain" id="PRO_0000231885" description="Homoserine O-succinyltransferase">
    <location>
        <begin position="1"/>
        <end position="390"/>
    </location>
</feature>
<feature type="domain" description="AB hydrolase-1" evidence="1">
    <location>
        <begin position="59"/>
        <end position="369"/>
    </location>
</feature>
<feature type="active site" description="Nucleophile" evidence="1">
    <location>
        <position position="165"/>
    </location>
</feature>
<feature type="active site" evidence="1">
    <location>
        <position position="330"/>
    </location>
</feature>
<feature type="active site" evidence="1">
    <location>
        <position position="363"/>
    </location>
</feature>
<feature type="binding site" evidence="1">
    <location>
        <position position="235"/>
    </location>
    <ligand>
        <name>substrate</name>
    </ligand>
</feature>
<feature type="binding site" evidence="1">
    <location>
        <position position="364"/>
    </location>
    <ligand>
        <name>substrate</name>
    </ligand>
</feature>
<feature type="site" description="Important for acyl-CoA specificity" evidence="1">
    <location>
        <position position="332"/>
    </location>
</feature>
<proteinExistence type="inferred from homology"/>
<accession>Q476W5</accession>
<organism>
    <name type="scientific">Cupriavidus pinatubonensis (strain JMP 134 / LMG 1197)</name>
    <name type="common">Cupriavidus necator (strain JMP 134)</name>
    <dbReference type="NCBI Taxonomy" id="264198"/>
    <lineage>
        <taxon>Bacteria</taxon>
        <taxon>Pseudomonadati</taxon>
        <taxon>Pseudomonadota</taxon>
        <taxon>Betaproteobacteria</taxon>
        <taxon>Burkholderiales</taxon>
        <taxon>Burkholderiaceae</taxon>
        <taxon>Cupriavidus</taxon>
    </lineage>
</organism>
<protein>
    <recommendedName>
        <fullName evidence="1">Homoserine O-succinyltransferase</fullName>
        <shortName evidence="1">HST</shortName>
        <ecNumber evidence="1">2.3.1.46</ecNumber>
    </recommendedName>
    <alternativeName>
        <fullName evidence="1">Homoserine transsuccinylase</fullName>
        <shortName evidence="1">HTS</shortName>
    </alternativeName>
</protein>
<gene>
    <name evidence="1" type="primary">metXS</name>
    <name type="ordered locus">Reut_A0186</name>
</gene>
<dbReference type="EC" id="2.3.1.46" evidence="1"/>
<dbReference type="EMBL" id="CP000090">
    <property type="protein sequence ID" value="AAZ59568.1"/>
    <property type="molecule type" value="Genomic_DNA"/>
</dbReference>
<dbReference type="SMR" id="Q476W5"/>
<dbReference type="STRING" id="264198.Reut_A0186"/>
<dbReference type="ESTHER" id="cuppj-metx">
    <property type="family name" value="Homoserine_transacetylase"/>
</dbReference>
<dbReference type="KEGG" id="reu:Reut_A0186"/>
<dbReference type="eggNOG" id="COG2021">
    <property type="taxonomic scope" value="Bacteria"/>
</dbReference>
<dbReference type="HOGENOM" id="CLU_028760_1_2_4"/>
<dbReference type="OrthoDB" id="9800754at2"/>
<dbReference type="UniPathway" id="UPA00051">
    <property type="reaction ID" value="UER00075"/>
</dbReference>
<dbReference type="GO" id="GO:0005737">
    <property type="term" value="C:cytoplasm"/>
    <property type="evidence" value="ECO:0007669"/>
    <property type="project" value="UniProtKB-SubCell"/>
</dbReference>
<dbReference type="GO" id="GO:0004414">
    <property type="term" value="F:homoserine O-acetyltransferase activity"/>
    <property type="evidence" value="ECO:0007669"/>
    <property type="project" value="TreeGrafter"/>
</dbReference>
<dbReference type="GO" id="GO:0008899">
    <property type="term" value="F:homoserine O-succinyltransferase activity"/>
    <property type="evidence" value="ECO:0007669"/>
    <property type="project" value="UniProtKB-UniRule"/>
</dbReference>
<dbReference type="GO" id="GO:0009092">
    <property type="term" value="P:homoserine metabolic process"/>
    <property type="evidence" value="ECO:0007669"/>
    <property type="project" value="TreeGrafter"/>
</dbReference>
<dbReference type="GO" id="GO:0009086">
    <property type="term" value="P:methionine biosynthetic process"/>
    <property type="evidence" value="ECO:0007669"/>
    <property type="project" value="UniProtKB-UniRule"/>
</dbReference>
<dbReference type="FunFam" id="1.10.1740.110:FF:000001">
    <property type="entry name" value="Homoserine O-acetyltransferase"/>
    <property type="match status" value="1"/>
</dbReference>
<dbReference type="Gene3D" id="1.10.1740.110">
    <property type="match status" value="1"/>
</dbReference>
<dbReference type="Gene3D" id="3.40.50.1820">
    <property type="entry name" value="alpha/beta hydrolase"/>
    <property type="match status" value="1"/>
</dbReference>
<dbReference type="HAMAP" id="MF_00296">
    <property type="entry name" value="MetX_acyltransf"/>
    <property type="match status" value="1"/>
</dbReference>
<dbReference type="InterPro" id="IPR000073">
    <property type="entry name" value="AB_hydrolase_1"/>
</dbReference>
<dbReference type="InterPro" id="IPR029058">
    <property type="entry name" value="AB_hydrolase_fold"/>
</dbReference>
<dbReference type="InterPro" id="IPR008220">
    <property type="entry name" value="HAT_MetX-like"/>
</dbReference>
<dbReference type="NCBIfam" id="TIGR01392">
    <property type="entry name" value="homoserO_Ac_trn"/>
    <property type="match status" value="1"/>
</dbReference>
<dbReference type="NCBIfam" id="NF001209">
    <property type="entry name" value="PRK00175.1"/>
    <property type="match status" value="1"/>
</dbReference>
<dbReference type="PANTHER" id="PTHR32268">
    <property type="entry name" value="HOMOSERINE O-ACETYLTRANSFERASE"/>
    <property type="match status" value="1"/>
</dbReference>
<dbReference type="PANTHER" id="PTHR32268:SF11">
    <property type="entry name" value="HOMOSERINE O-ACETYLTRANSFERASE"/>
    <property type="match status" value="1"/>
</dbReference>
<dbReference type="Pfam" id="PF00561">
    <property type="entry name" value="Abhydrolase_1"/>
    <property type="match status" value="1"/>
</dbReference>
<dbReference type="PIRSF" id="PIRSF000443">
    <property type="entry name" value="Homoser_Ac_trans"/>
    <property type="match status" value="1"/>
</dbReference>
<dbReference type="SUPFAM" id="SSF53474">
    <property type="entry name" value="alpha/beta-Hydrolases"/>
    <property type="match status" value="1"/>
</dbReference>
<keyword id="KW-0012">Acyltransferase</keyword>
<keyword id="KW-0028">Amino-acid biosynthesis</keyword>
<keyword id="KW-0963">Cytoplasm</keyword>
<keyword id="KW-0486">Methionine biosynthesis</keyword>
<keyword id="KW-0808">Transferase</keyword>
<sequence length="390" mass="43101">MTDVALPPAALTLPNDSVGVVTPQRMHFQEPLKLRNGSSIAGYDLMVETYGTLNADRSNAVLVCHALNASHHVAGVYADDPRDVGWWDNMVGPGKPLDTNRFFVIGVNNLGSCFGSTGPMSTNPATGEPYGAAFPVVTVEDWVNAQARVADVFGITQFAAVMGGSLGGMQAVAWSLMYPQRLRHCIVVASTPKLSAQNIAFNEVARSSILSDPDFHGGNYYAHGVKPKRGLRVARMIGHITYLSDEDMAEKFGRELKTEDIRFSFDVEFQVESYLRYQGDKFAEYFDANTYLLITRALDYFDPALAYGGDLTRAMAQTQASFLVASFTTDWRFAPNRSRELVKALLDNKRPVSYAEIDAPHGHDAFLLDDPRYHNLMRAYYDRIAEEIGA</sequence>
<name>METXS_CUPPJ</name>
<reference key="1">
    <citation type="journal article" date="2010" name="PLoS ONE">
        <title>The complete multipartite genome sequence of Cupriavidus necator JMP134, a versatile pollutant degrader.</title>
        <authorList>
            <person name="Lykidis A."/>
            <person name="Perez-Pantoja D."/>
            <person name="Ledger T."/>
            <person name="Mavromatis K."/>
            <person name="Anderson I.J."/>
            <person name="Ivanova N.N."/>
            <person name="Hooper S.D."/>
            <person name="Lapidus A."/>
            <person name="Lucas S."/>
            <person name="Gonzalez B."/>
            <person name="Kyrpides N.C."/>
        </authorList>
    </citation>
    <scope>NUCLEOTIDE SEQUENCE [LARGE SCALE GENOMIC DNA]</scope>
    <source>
        <strain>JMP134 / LMG 1197</strain>
    </source>
</reference>
<comment type="function">
    <text evidence="1">Transfers a succinyl group from succinyl-CoA to L-homoserine, forming succinyl-L-homoserine.</text>
</comment>
<comment type="catalytic activity">
    <reaction evidence="1">
        <text>L-homoserine + succinyl-CoA = O-succinyl-L-homoserine + CoA</text>
        <dbReference type="Rhea" id="RHEA:22008"/>
        <dbReference type="ChEBI" id="CHEBI:57287"/>
        <dbReference type="ChEBI" id="CHEBI:57292"/>
        <dbReference type="ChEBI" id="CHEBI:57476"/>
        <dbReference type="ChEBI" id="CHEBI:57661"/>
        <dbReference type="EC" id="2.3.1.46"/>
    </reaction>
</comment>
<comment type="pathway">
    <text evidence="1">Amino-acid biosynthesis; L-methionine biosynthesis via de novo pathway; O-succinyl-L-homoserine from L-homoserine: step 1/1.</text>
</comment>
<comment type="subunit">
    <text evidence="1">Homodimer.</text>
</comment>
<comment type="subcellular location">
    <subcellularLocation>
        <location evidence="1">Cytoplasm</location>
    </subcellularLocation>
</comment>
<comment type="similarity">
    <text evidence="1">Belongs to the AB hydrolase superfamily. MetX family.</text>
</comment>